<feature type="chain" id="PRO_0000363412" description="Uncharacterized protein At4g19900">
    <location>
        <begin position="1"/>
        <end position="644"/>
    </location>
</feature>
<feature type="region of interest" description="Disordered" evidence="1">
    <location>
        <begin position="65"/>
        <end position="117"/>
    </location>
</feature>
<feature type="compositionally biased region" description="Acidic residues" evidence="1">
    <location>
        <begin position="89"/>
        <end position="114"/>
    </location>
</feature>
<feature type="sequence conflict" description="In Ref. 3." evidence="2" ref="3">
    <original>H</original>
    <variation>N</variation>
    <location>
        <position position="461"/>
    </location>
</feature>
<feature type="sequence conflict" description="In Ref. 3." evidence="2" ref="3">
    <original>L</original>
    <variation>F</variation>
    <location>
        <position position="530"/>
    </location>
</feature>
<feature type="sequence conflict" description="In Ref. 3." evidence="2" ref="3">
    <original>N</original>
    <variation>Y</variation>
    <location>
        <position position="566"/>
    </location>
</feature>
<comment type="sequence caution" evidence="2">
    <conflict type="frameshift">
        <sequence resource="EMBL" id="BX836496"/>
    </conflict>
</comment>
<comment type="sequence caution" evidence="2">
    <conflict type="miscellaneous discrepancy">
        <sequence resource="EMBL" id="BX841196"/>
    </conflict>
    <text>Sequencing errors.</text>
</comment>
<comment type="sequence caution" evidence="2">
    <conflict type="erroneous gene model prediction">
        <sequence resource="EMBL-CDS" id="CAB52870"/>
    </conflict>
    <text>The predicted gene has been split into 2 genes: At4g19890 and At4g19900.</text>
</comment>
<comment type="sequence caution" evidence="2">
    <conflict type="erroneous gene model prediction">
        <sequence resource="EMBL-CDS" id="CAB78991"/>
    </conflict>
    <text>The predicted gene has been split into 2 genes: At4g19890 and At4g19900.</text>
</comment>
<name>Y4990_ARATH</name>
<gene>
    <name type="ordered locus">At4g19900</name>
    <name type="ORF">F18F4.6</name>
</gene>
<sequence length="644" mass="73490">MLRSRRSRSRHGAQACAVMSAVLLLASVSLLYTRLSLFSSHSPNHLRSGSSEDTVLFPDSVLVSDSDVETTGGGGRGSTTSTEDRIDEHDDAIEDDGVSNEEDENQDAEQEQEVDLNRNKAASSSGFYFDHVNGVIRRAFNKRSIDEWDYDYTGFSIDSDSSGDKSSRAAFGSDDVPLDESIRRKIVEVTSVEDALLLKSGKKVSPLRQGWGDWFDKKGDFLRRDRMFKSNIETLNPLNNPMLQDPDSVGNTGLTRGDKVVQKWRLNQIKRNPFMAKKPLSVVSEKKEPNEFRLLSSVGEIKRGERKTLDNDEKIEREEQKNVESERKHDEVTEHMYADGTKWGYYPGIEPSLSFSDFMDSFFRKEKCSMRVFMVWNSPGWMFSVRHQRGLESLLSQHRDACVVVFSETVELDFFRNSFVKDSYKVAVAMPNLDELLQDTPTHVFASVWFDWRKTKFYPTHYSELVRLAALYKYGGVYLDSDVIVLGSLSSLRNTIGMEDQVAGESLNGAVMSFEKKSPFLLECLNEYYLTYDDKCLRCNGADLLTRVAKRFLNGKNRRMNQQELNIRPSSVFFPINSQQITNYFAYPAIEDERSQQDESFKKILNESLTFHFWNSVTSSLIPEPESLVAKFLDHSCIRCSDVL</sequence>
<keyword id="KW-1185">Reference proteome</keyword>
<organism>
    <name type="scientific">Arabidopsis thaliana</name>
    <name type="common">Mouse-ear cress</name>
    <dbReference type="NCBI Taxonomy" id="3702"/>
    <lineage>
        <taxon>Eukaryota</taxon>
        <taxon>Viridiplantae</taxon>
        <taxon>Streptophyta</taxon>
        <taxon>Embryophyta</taxon>
        <taxon>Tracheophyta</taxon>
        <taxon>Spermatophyta</taxon>
        <taxon>Magnoliopsida</taxon>
        <taxon>eudicotyledons</taxon>
        <taxon>Gunneridae</taxon>
        <taxon>Pentapetalae</taxon>
        <taxon>rosids</taxon>
        <taxon>malvids</taxon>
        <taxon>Brassicales</taxon>
        <taxon>Brassicaceae</taxon>
        <taxon>Camelineae</taxon>
        <taxon>Arabidopsis</taxon>
    </lineage>
</organism>
<protein>
    <recommendedName>
        <fullName>Uncharacterized protein At4g19900</fullName>
    </recommendedName>
</protein>
<dbReference type="EMBL" id="AL021637">
    <property type="protein sequence ID" value="CAB52870.1"/>
    <property type="status" value="ALT_SEQ"/>
    <property type="molecule type" value="Genomic_DNA"/>
</dbReference>
<dbReference type="EMBL" id="AL161551">
    <property type="protein sequence ID" value="CAB78991.1"/>
    <property type="status" value="ALT_SEQ"/>
    <property type="molecule type" value="Genomic_DNA"/>
</dbReference>
<dbReference type="EMBL" id="CP002687">
    <property type="protein sequence ID" value="AEE84243.1"/>
    <property type="molecule type" value="Genomic_DNA"/>
</dbReference>
<dbReference type="EMBL" id="BX836496">
    <property type="status" value="NOT_ANNOTATED_CDS"/>
    <property type="molecule type" value="mRNA"/>
</dbReference>
<dbReference type="EMBL" id="BX841196">
    <property type="status" value="NOT_ANNOTATED_CDS"/>
    <property type="molecule type" value="mRNA"/>
</dbReference>
<dbReference type="PIR" id="F85225">
    <property type="entry name" value="F85225"/>
</dbReference>
<dbReference type="RefSeq" id="NP_193724.2">
    <property type="nucleotide sequence ID" value="NM_118109.3"/>
</dbReference>
<dbReference type="FunCoup" id="P0C8Q4">
    <property type="interactions" value="1884"/>
</dbReference>
<dbReference type="STRING" id="3702.P0C8Q4"/>
<dbReference type="CAZy" id="GT32">
    <property type="family name" value="Glycosyltransferase Family 32"/>
</dbReference>
<dbReference type="iPTMnet" id="P0C8Q4"/>
<dbReference type="PaxDb" id="3702-AT4G19900.1"/>
<dbReference type="ProteomicsDB" id="243067"/>
<dbReference type="EnsemblPlants" id="AT4G19900.1">
    <property type="protein sequence ID" value="AT4G19900.1"/>
    <property type="gene ID" value="AT4G19900"/>
</dbReference>
<dbReference type="GeneID" id="827735"/>
<dbReference type="Gramene" id="AT4G19900.1">
    <property type="protein sequence ID" value="AT4G19900.1"/>
    <property type="gene ID" value="AT4G19900"/>
</dbReference>
<dbReference type="KEGG" id="ath:AT4G19900"/>
<dbReference type="Araport" id="AT4G19900"/>
<dbReference type="TAIR" id="AT4G19900"/>
<dbReference type="eggNOG" id="KOG1928">
    <property type="taxonomic scope" value="Eukaryota"/>
</dbReference>
<dbReference type="HOGENOM" id="CLU_019489_0_0_1"/>
<dbReference type="InParanoid" id="P0C8Q4"/>
<dbReference type="OMA" id="YPIHYSE"/>
<dbReference type="PhylomeDB" id="P0C8Q4"/>
<dbReference type="PRO" id="PR:P0C8Q4"/>
<dbReference type="Proteomes" id="UP000006548">
    <property type="component" value="Chromosome 4"/>
</dbReference>
<dbReference type="ExpressionAtlas" id="P0C8Q4">
    <property type="expression patterns" value="baseline and differential"/>
</dbReference>
<dbReference type="Gene3D" id="3.90.550.20">
    <property type="match status" value="1"/>
</dbReference>
<dbReference type="InterPro" id="IPR007652">
    <property type="entry name" value="A1-4-GlycosylTfrase_dom"/>
</dbReference>
<dbReference type="InterPro" id="IPR007577">
    <property type="entry name" value="GlycoTrfase_DXD_sugar-bd_CS"/>
</dbReference>
<dbReference type="InterPro" id="IPR029044">
    <property type="entry name" value="Nucleotide-diphossugar_trans"/>
</dbReference>
<dbReference type="InterPro" id="IPR044789">
    <property type="entry name" value="Put_A1-4-GlycosylTfrase_plant"/>
</dbReference>
<dbReference type="PANTHER" id="PTHR47213">
    <property type="entry name" value="OS07G0567300 PROTEIN"/>
    <property type="match status" value="1"/>
</dbReference>
<dbReference type="PANTHER" id="PTHR47213:SF1">
    <property type="entry name" value="OS07G0567300 PROTEIN"/>
    <property type="match status" value="1"/>
</dbReference>
<dbReference type="Pfam" id="PF04572">
    <property type="entry name" value="Gb3_synth"/>
    <property type="match status" value="1"/>
</dbReference>
<dbReference type="Pfam" id="PF04488">
    <property type="entry name" value="Gly_transf_sug"/>
    <property type="match status" value="1"/>
</dbReference>
<dbReference type="SUPFAM" id="SSF53448">
    <property type="entry name" value="Nucleotide-diphospho-sugar transferases"/>
    <property type="match status" value="1"/>
</dbReference>
<evidence type="ECO:0000256" key="1">
    <source>
        <dbReference type="SAM" id="MobiDB-lite"/>
    </source>
</evidence>
<evidence type="ECO:0000305" key="2"/>
<accession>P0C8Q4</accession>
<accession>Q9SNA8</accession>
<proteinExistence type="evidence at transcript level"/>
<reference key="1">
    <citation type="journal article" date="1999" name="Nature">
        <title>Sequence and analysis of chromosome 4 of the plant Arabidopsis thaliana.</title>
        <authorList>
            <person name="Mayer K.F.X."/>
            <person name="Schueller C."/>
            <person name="Wambutt R."/>
            <person name="Murphy G."/>
            <person name="Volckaert G."/>
            <person name="Pohl T."/>
            <person name="Duesterhoeft A."/>
            <person name="Stiekema W."/>
            <person name="Entian K.-D."/>
            <person name="Terryn N."/>
            <person name="Harris B."/>
            <person name="Ansorge W."/>
            <person name="Brandt P."/>
            <person name="Grivell L.A."/>
            <person name="Rieger M."/>
            <person name="Weichselgartner M."/>
            <person name="de Simone V."/>
            <person name="Obermaier B."/>
            <person name="Mache R."/>
            <person name="Mueller M."/>
            <person name="Kreis M."/>
            <person name="Delseny M."/>
            <person name="Puigdomenech P."/>
            <person name="Watson M."/>
            <person name="Schmidtheini T."/>
            <person name="Reichert B."/>
            <person name="Portetelle D."/>
            <person name="Perez-Alonso M."/>
            <person name="Boutry M."/>
            <person name="Bancroft I."/>
            <person name="Vos P."/>
            <person name="Hoheisel J."/>
            <person name="Zimmermann W."/>
            <person name="Wedler H."/>
            <person name="Ridley P."/>
            <person name="Langham S.-A."/>
            <person name="McCullagh B."/>
            <person name="Bilham L."/>
            <person name="Robben J."/>
            <person name="van der Schueren J."/>
            <person name="Grymonprez B."/>
            <person name="Chuang Y.-J."/>
            <person name="Vandenbussche F."/>
            <person name="Braeken M."/>
            <person name="Weltjens I."/>
            <person name="Voet M."/>
            <person name="Bastiaens I."/>
            <person name="Aert R."/>
            <person name="Defoor E."/>
            <person name="Weitzenegger T."/>
            <person name="Bothe G."/>
            <person name="Ramsperger U."/>
            <person name="Hilbert H."/>
            <person name="Braun M."/>
            <person name="Holzer E."/>
            <person name="Brandt A."/>
            <person name="Peters S."/>
            <person name="van Staveren M."/>
            <person name="Dirkse W."/>
            <person name="Mooijman P."/>
            <person name="Klein Lankhorst R."/>
            <person name="Rose M."/>
            <person name="Hauf J."/>
            <person name="Koetter P."/>
            <person name="Berneiser S."/>
            <person name="Hempel S."/>
            <person name="Feldpausch M."/>
            <person name="Lamberth S."/>
            <person name="Van den Daele H."/>
            <person name="De Keyser A."/>
            <person name="Buysshaert C."/>
            <person name="Gielen J."/>
            <person name="Villarroel R."/>
            <person name="De Clercq R."/>
            <person name="van Montagu M."/>
            <person name="Rogers J."/>
            <person name="Cronin A."/>
            <person name="Quail M.A."/>
            <person name="Bray-Allen S."/>
            <person name="Clark L."/>
            <person name="Doggett J."/>
            <person name="Hall S."/>
            <person name="Kay M."/>
            <person name="Lennard N."/>
            <person name="McLay K."/>
            <person name="Mayes R."/>
            <person name="Pettett A."/>
            <person name="Rajandream M.A."/>
            <person name="Lyne M."/>
            <person name="Benes V."/>
            <person name="Rechmann S."/>
            <person name="Borkova D."/>
            <person name="Bloecker H."/>
            <person name="Scharfe M."/>
            <person name="Grimm M."/>
            <person name="Loehnert T.-H."/>
            <person name="Dose S."/>
            <person name="de Haan M."/>
            <person name="Maarse A.C."/>
            <person name="Schaefer M."/>
            <person name="Mueller-Auer S."/>
            <person name="Gabel C."/>
            <person name="Fuchs M."/>
            <person name="Fartmann B."/>
            <person name="Granderath K."/>
            <person name="Dauner D."/>
            <person name="Herzl A."/>
            <person name="Neumann S."/>
            <person name="Argiriou A."/>
            <person name="Vitale D."/>
            <person name="Liguori R."/>
            <person name="Piravandi E."/>
            <person name="Massenet O."/>
            <person name="Quigley F."/>
            <person name="Clabauld G."/>
            <person name="Muendlein A."/>
            <person name="Felber R."/>
            <person name="Schnabl S."/>
            <person name="Hiller R."/>
            <person name="Schmidt W."/>
            <person name="Lecharny A."/>
            <person name="Aubourg S."/>
            <person name="Chefdor F."/>
            <person name="Cooke R."/>
            <person name="Berger C."/>
            <person name="Monfort A."/>
            <person name="Casacuberta E."/>
            <person name="Gibbons T."/>
            <person name="Weber N."/>
            <person name="Vandenbol M."/>
            <person name="Bargues M."/>
            <person name="Terol J."/>
            <person name="Torres A."/>
            <person name="Perez-Perez A."/>
            <person name="Purnelle B."/>
            <person name="Bent E."/>
            <person name="Johnson S."/>
            <person name="Tacon D."/>
            <person name="Jesse T."/>
            <person name="Heijnen L."/>
            <person name="Schwarz S."/>
            <person name="Scholler P."/>
            <person name="Heber S."/>
            <person name="Francs P."/>
            <person name="Bielke C."/>
            <person name="Frishman D."/>
            <person name="Haase D."/>
            <person name="Lemcke K."/>
            <person name="Mewes H.-W."/>
            <person name="Stocker S."/>
            <person name="Zaccaria P."/>
            <person name="Bevan M."/>
            <person name="Wilson R.K."/>
            <person name="de la Bastide M."/>
            <person name="Habermann K."/>
            <person name="Parnell L."/>
            <person name="Dedhia N."/>
            <person name="Gnoj L."/>
            <person name="Schutz K."/>
            <person name="Huang E."/>
            <person name="Spiegel L."/>
            <person name="Sekhon M."/>
            <person name="Murray J."/>
            <person name="Sheet P."/>
            <person name="Cordes M."/>
            <person name="Abu-Threideh J."/>
            <person name="Stoneking T."/>
            <person name="Kalicki J."/>
            <person name="Graves T."/>
            <person name="Harmon G."/>
            <person name="Edwards J."/>
            <person name="Latreille P."/>
            <person name="Courtney L."/>
            <person name="Cloud J."/>
            <person name="Abbott A."/>
            <person name="Scott K."/>
            <person name="Johnson D."/>
            <person name="Minx P."/>
            <person name="Bentley D."/>
            <person name="Fulton B."/>
            <person name="Miller N."/>
            <person name="Greco T."/>
            <person name="Kemp K."/>
            <person name="Kramer J."/>
            <person name="Fulton L."/>
            <person name="Mardis E."/>
            <person name="Dante M."/>
            <person name="Pepin K."/>
            <person name="Hillier L.W."/>
            <person name="Nelson J."/>
            <person name="Spieth J."/>
            <person name="Ryan E."/>
            <person name="Andrews S."/>
            <person name="Geisel C."/>
            <person name="Layman D."/>
            <person name="Du H."/>
            <person name="Ali J."/>
            <person name="Berghoff A."/>
            <person name="Jones K."/>
            <person name="Drone K."/>
            <person name="Cotton M."/>
            <person name="Joshu C."/>
            <person name="Antonoiu B."/>
            <person name="Zidanic M."/>
            <person name="Strong C."/>
            <person name="Sun H."/>
            <person name="Lamar B."/>
            <person name="Yordan C."/>
            <person name="Ma P."/>
            <person name="Zhong J."/>
            <person name="Preston R."/>
            <person name="Vil D."/>
            <person name="Shekher M."/>
            <person name="Matero A."/>
            <person name="Shah R."/>
            <person name="Swaby I.K."/>
            <person name="O'Shaughnessy A."/>
            <person name="Rodriguez M."/>
            <person name="Hoffman J."/>
            <person name="Till S."/>
            <person name="Granat S."/>
            <person name="Shohdy N."/>
            <person name="Hasegawa A."/>
            <person name="Hameed A."/>
            <person name="Lodhi M."/>
            <person name="Johnson A."/>
            <person name="Chen E."/>
            <person name="Marra M.A."/>
            <person name="Martienssen R."/>
            <person name="McCombie W.R."/>
        </authorList>
    </citation>
    <scope>NUCLEOTIDE SEQUENCE [LARGE SCALE GENOMIC DNA]</scope>
    <source>
        <strain>cv. Columbia</strain>
    </source>
</reference>
<reference key="2">
    <citation type="journal article" date="2017" name="Plant J.">
        <title>Araport11: a complete reannotation of the Arabidopsis thaliana reference genome.</title>
        <authorList>
            <person name="Cheng C.Y."/>
            <person name="Krishnakumar V."/>
            <person name="Chan A.P."/>
            <person name="Thibaud-Nissen F."/>
            <person name="Schobel S."/>
            <person name="Town C.D."/>
        </authorList>
    </citation>
    <scope>GENOME REANNOTATION</scope>
    <source>
        <strain>cv. Columbia</strain>
    </source>
</reference>
<reference key="3">
    <citation type="journal article" date="2004" name="Genome Res.">
        <title>Whole genome sequence comparisons and 'full-length' cDNA sequences: a combined approach to evaluate and improve Arabidopsis genome annotation.</title>
        <authorList>
            <person name="Castelli V."/>
            <person name="Aury J.-M."/>
            <person name="Jaillon O."/>
            <person name="Wincker P."/>
            <person name="Clepet C."/>
            <person name="Menard M."/>
            <person name="Cruaud C."/>
            <person name="Quetier F."/>
            <person name="Scarpelli C."/>
            <person name="Schaechter V."/>
            <person name="Temple G."/>
            <person name="Caboche M."/>
            <person name="Weissenbach J."/>
            <person name="Salanoubat M."/>
        </authorList>
    </citation>
    <scope>NUCLEOTIDE SEQUENCE [LARGE SCALE MRNA]</scope>
    <source>
        <strain>cv. Columbia</strain>
    </source>
</reference>